<feature type="chain" id="PRO_0000159254" description="Tungsten-containing formylmethanofuran dehydrogenase 2 subunit G">
    <location>
        <begin position="1"/>
        <end position="79"/>
    </location>
</feature>
<feature type="domain" description="4Fe-4S ferredoxin-type 1" evidence="3">
    <location>
        <begin position="2"/>
        <end position="31"/>
    </location>
</feature>
<feature type="domain" description="4Fe-4S ferredoxin-type 2" evidence="3">
    <location>
        <begin position="51"/>
        <end position="79"/>
    </location>
</feature>
<feature type="binding site" evidence="1">
    <location>
        <position position="11"/>
    </location>
    <ligand>
        <name>[4Fe-4S] cluster</name>
        <dbReference type="ChEBI" id="CHEBI:49883"/>
        <label>1</label>
    </ligand>
</feature>
<feature type="binding site" evidence="1">
    <location>
        <position position="14"/>
    </location>
    <ligand>
        <name>[4Fe-4S] cluster</name>
        <dbReference type="ChEBI" id="CHEBI:49883"/>
        <label>1</label>
    </ligand>
</feature>
<feature type="binding site" evidence="1">
    <location>
        <position position="17"/>
    </location>
    <ligand>
        <name>[4Fe-4S] cluster</name>
        <dbReference type="ChEBI" id="CHEBI:49883"/>
        <label>1</label>
    </ligand>
</feature>
<feature type="binding site" evidence="1">
    <location>
        <position position="21"/>
    </location>
    <ligand>
        <name>[4Fe-4S] cluster</name>
        <dbReference type="ChEBI" id="CHEBI:49883"/>
        <label>2</label>
    </ligand>
</feature>
<feature type="binding site" evidence="1">
    <location>
        <position position="60"/>
    </location>
    <ligand>
        <name>[4Fe-4S] cluster</name>
        <dbReference type="ChEBI" id="CHEBI:49883"/>
        <label>2</label>
    </ligand>
</feature>
<feature type="binding site" evidence="1">
    <location>
        <position position="63"/>
    </location>
    <ligand>
        <name>[4Fe-4S] cluster</name>
        <dbReference type="ChEBI" id="CHEBI:49883"/>
        <label>2</label>
    </ligand>
</feature>
<feature type="binding site" evidence="1">
    <location>
        <position position="66"/>
    </location>
    <ligand>
        <name>[4Fe-4S] cluster</name>
        <dbReference type="ChEBI" id="CHEBI:49883"/>
        <label>2</label>
    </ligand>
</feature>
<feature type="binding site" evidence="1">
    <location>
        <position position="70"/>
    </location>
    <ligand>
        <name>[4Fe-4S] cluster</name>
        <dbReference type="ChEBI" id="CHEBI:49883"/>
        <label>1</label>
    </ligand>
</feature>
<reference key="1">
    <citation type="journal article" date="1997" name="Mol. Microbiol.">
        <title>A selenium-dependent and a selenium-independent formylmethanofuran dehydrogenase and their transcriptional regulation in the hyperthermophilic Methanopyrus kandleri.</title>
        <authorList>
            <person name="Vorholt J.A."/>
            <person name="Vaupel M."/>
            <person name="Thauer R.K."/>
        </authorList>
    </citation>
    <scope>NUCLEOTIDE SEQUENCE [GENOMIC DNA]</scope>
    <source>
        <strain>AV19 / DSM 6324 / JCM 9639 / NBRC 100938</strain>
    </source>
</reference>
<reference key="2">
    <citation type="journal article" date="2002" name="Proc. Natl. Acad. Sci. U.S.A.">
        <title>The complete genome of hyperthermophile Methanopyrus kandleri AV19 and monophyly of archaeal methanogens.</title>
        <authorList>
            <person name="Slesarev A.I."/>
            <person name="Mezhevaya K.V."/>
            <person name="Makarova K.S."/>
            <person name="Polushin N.N."/>
            <person name="Shcherbinina O.V."/>
            <person name="Shakhova V.V."/>
            <person name="Belova G.I."/>
            <person name="Aravind L."/>
            <person name="Natale D.A."/>
            <person name="Rogozin I.B."/>
            <person name="Tatusov R.L."/>
            <person name="Wolf Y.I."/>
            <person name="Stetter K.O."/>
            <person name="Malykh A.G."/>
            <person name="Koonin E.V."/>
            <person name="Kozyavkin S.A."/>
        </authorList>
    </citation>
    <scope>NUCLEOTIDE SEQUENCE [LARGE SCALE GENOMIC DNA]</scope>
    <source>
        <strain>AV19 / DSM 6324 / JCM 9639 / NBRC 100938</strain>
    </source>
</reference>
<sequence>MVKIVIHEERCHGCGNCVIACPVNACNSPNVWGGKGPEDGEDVVIKVVNGTVSVINEDLCEACMTCELACPVDAIEIKT</sequence>
<comment type="function">
    <text evidence="2">Catalyzes the reversible oxidation of CO(2) and methanofuran (MFR) to N-formylmethanofuran (CHO-MFR). This enzyme is oxygen-labile. May function as an electron transfer protein.</text>
</comment>
<comment type="catalytic activity">
    <reaction evidence="2">
        <text>N-formylmethanofuran + 2 oxidized [2Fe-2S]-[ferredoxin] + H2O = methanofuran + 2 reduced [2Fe-2S]-[ferredoxin] + CO2 + H(+)</text>
        <dbReference type="Rhea" id="RHEA:19841"/>
        <dbReference type="Rhea" id="RHEA-COMP:10000"/>
        <dbReference type="Rhea" id="RHEA-COMP:10001"/>
        <dbReference type="ChEBI" id="CHEBI:15377"/>
        <dbReference type="ChEBI" id="CHEBI:15378"/>
        <dbReference type="ChEBI" id="CHEBI:16526"/>
        <dbReference type="ChEBI" id="CHEBI:33737"/>
        <dbReference type="ChEBI" id="CHEBI:33738"/>
        <dbReference type="ChEBI" id="CHEBI:57727"/>
        <dbReference type="ChEBI" id="CHEBI:58151"/>
        <dbReference type="EC" id="1.2.7.12"/>
    </reaction>
</comment>
<comment type="cofactor">
    <cofactor evidence="4">
        <name>[4Fe-4S] cluster</name>
        <dbReference type="ChEBI" id="CHEBI:49883"/>
    </cofactor>
    <text evidence="4">Binds 2 [4Fe-4S] clusters.</text>
</comment>
<comment type="activity regulation">
    <text evidence="1">Not inactivated by cyanide.</text>
</comment>
<comment type="pathway">
    <text>One-carbon metabolism; methanogenesis from CO(2); 5,10-methenyl-5,6,7,8-tetrahydromethanopterin from CO(2): step 1/3.</text>
</comment>
<comment type="induction">
    <text>By growth on tungsten or molybdenum under anaerobic conditions.</text>
</comment>
<organism>
    <name type="scientific">Methanopyrus kandleri (strain AV19 / DSM 6324 / JCM 9639 / NBRC 100938)</name>
    <dbReference type="NCBI Taxonomy" id="190192"/>
    <lineage>
        <taxon>Archaea</taxon>
        <taxon>Methanobacteriati</taxon>
        <taxon>Methanobacteriota</taxon>
        <taxon>Methanomada group</taxon>
        <taxon>Methanopyri</taxon>
        <taxon>Methanopyrales</taxon>
        <taxon>Methanopyraceae</taxon>
        <taxon>Methanopyrus</taxon>
    </lineage>
</organism>
<name>FWDG_METKA</name>
<protein>
    <recommendedName>
        <fullName>Tungsten-containing formylmethanofuran dehydrogenase 2 subunit G</fullName>
        <ecNumber evidence="2">1.2.7.12</ecNumber>
    </recommendedName>
    <alternativeName>
        <fullName>Tungsten-containing formylmethanofuran dehydrogenase II subunit G</fullName>
    </alternativeName>
</protein>
<accession>Q49611</accession>
<proteinExistence type="evidence at transcript level"/>
<evidence type="ECO:0000250" key="1"/>
<evidence type="ECO:0000250" key="2">
    <source>
        <dbReference type="UniProtKB" id="Q48943"/>
    </source>
</evidence>
<evidence type="ECO:0000255" key="3">
    <source>
        <dbReference type="PROSITE-ProRule" id="PRU00711"/>
    </source>
</evidence>
<evidence type="ECO:0000305" key="4"/>
<dbReference type="EC" id="1.2.7.12" evidence="2"/>
<dbReference type="EMBL" id="X98917">
    <property type="protein sequence ID" value="CAA67417.1"/>
    <property type="molecule type" value="Genomic_DNA"/>
</dbReference>
<dbReference type="EMBL" id="AE009439">
    <property type="protein sequence ID" value="AAM02738.1"/>
    <property type="molecule type" value="Genomic_DNA"/>
</dbReference>
<dbReference type="RefSeq" id="WP_011019893.1">
    <property type="nucleotide sequence ID" value="NC_003551.1"/>
</dbReference>
<dbReference type="SMR" id="Q49611"/>
<dbReference type="FunCoup" id="Q49611">
    <property type="interactions" value="64"/>
</dbReference>
<dbReference type="STRING" id="190192.MK1525"/>
<dbReference type="PaxDb" id="190192-MK1525"/>
<dbReference type="EnsemblBacteria" id="AAM02738">
    <property type="protein sequence ID" value="AAM02738"/>
    <property type="gene ID" value="MK1525"/>
</dbReference>
<dbReference type="GeneID" id="1478120"/>
<dbReference type="KEGG" id="mka:MK1525"/>
<dbReference type="PATRIC" id="fig|190192.8.peg.1685"/>
<dbReference type="HOGENOM" id="CLU_139698_5_4_2"/>
<dbReference type="InParanoid" id="Q49611"/>
<dbReference type="OrthoDB" id="230142at2157"/>
<dbReference type="UniPathway" id="UPA00640">
    <property type="reaction ID" value="UER00692"/>
</dbReference>
<dbReference type="Proteomes" id="UP000001826">
    <property type="component" value="Chromosome"/>
</dbReference>
<dbReference type="GO" id="GO:0051539">
    <property type="term" value="F:4 iron, 4 sulfur cluster binding"/>
    <property type="evidence" value="ECO:0007669"/>
    <property type="project" value="UniProtKB-KW"/>
</dbReference>
<dbReference type="GO" id="GO:0018493">
    <property type="term" value="F:formylmethanofuran dehydrogenase activity"/>
    <property type="evidence" value="ECO:0007669"/>
    <property type="project" value="UniProtKB-EC"/>
</dbReference>
<dbReference type="GO" id="GO:0046872">
    <property type="term" value="F:metal ion binding"/>
    <property type="evidence" value="ECO:0007669"/>
    <property type="project" value="UniProtKB-KW"/>
</dbReference>
<dbReference type="GO" id="GO:0019386">
    <property type="term" value="P:methanogenesis, from carbon dioxide"/>
    <property type="evidence" value="ECO:0007669"/>
    <property type="project" value="UniProtKB-UniPathway"/>
</dbReference>
<dbReference type="Gene3D" id="3.30.70.20">
    <property type="match status" value="2"/>
</dbReference>
<dbReference type="InterPro" id="IPR017896">
    <property type="entry name" value="4Fe4S_Fe-S-bd"/>
</dbReference>
<dbReference type="InterPro" id="IPR017900">
    <property type="entry name" value="4Fe4S_Fe_S_CS"/>
</dbReference>
<dbReference type="Pfam" id="PF12838">
    <property type="entry name" value="Fer4_7"/>
    <property type="match status" value="1"/>
</dbReference>
<dbReference type="SUPFAM" id="SSF54862">
    <property type="entry name" value="4Fe-4S ferredoxins"/>
    <property type="match status" value="1"/>
</dbReference>
<dbReference type="PROSITE" id="PS00198">
    <property type="entry name" value="4FE4S_FER_1"/>
    <property type="match status" value="2"/>
</dbReference>
<dbReference type="PROSITE" id="PS51379">
    <property type="entry name" value="4FE4S_FER_2"/>
    <property type="match status" value="2"/>
</dbReference>
<keyword id="KW-0004">4Fe-4S</keyword>
<keyword id="KW-0249">Electron transport</keyword>
<keyword id="KW-0408">Iron</keyword>
<keyword id="KW-0411">Iron-sulfur</keyword>
<keyword id="KW-0479">Metal-binding</keyword>
<keyword id="KW-0484">Methanogenesis</keyword>
<keyword id="KW-0560">Oxidoreductase</keyword>
<keyword id="KW-1185">Reference proteome</keyword>
<keyword id="KW-0677">Repeat</keyword>
<keyword id="KW-0813">Transport</keyword>
<gene>
    <name type="primary">fwdG</name>
    <name type="synonym">fudG</name>
    <name type="ordered locus">MK1525</name>
</gene>